<evidence type="ECO:0000255" key="1"/>
<evidence type="ECO:0000305" key="2"/>
<name>POND_DICDI</name>
<accession>Q54SJ8</accession>
<organism>
    <name type="scientific">Dictyostelium discoideum</name>
    <name type="common">Social amoeba</name>
    <dbReference type="NCBI Taxonomy" id="44689"/>
    <lineage>
        <taxon>Eukaryota</taxon>
        <taxon>Amoebozoa</taxon>
        <taxon>Evosea</taxon>
        <taxon>Eumycetozoa</taxon>
        <taxon>Dictyostelia</taxon>
        <taxon>Dictyosteliales</taxon>
        <taxon>Dictyosteliaceae</taxon>
        <taxon>Dictyostelium</taxon>
    </lineage>
</organism>
<feature type="signal peptide" evidence="1">
    <location>
        <begin position="1"/>
        <end position="20"/>
    </location>
</feature>
<feature type="chain" id="PRO_0000312144" description="Ponticulin-like protein D">
    <location>
        <begin position="21"/>
        <end position="125"/>
    </location>
</feature>
<feature type="propeptide" id="PRO_0000312145" description="Removed in mature form" evidence="1">
    <location>
        <begin position="126"/>
        <end position="148"/>
    </location>
</feature>
<feature type="lipid moiety-binding region" description="GPI-like-anchor amidated aspartate" evidence="1">
    <location>
        <position position="125"/>
    </location>
</feature>
<feature type="glycosylation site" description="N-linked (GlcNAc...) asparagine" evidence="1">
    <location>
        <position position="67"/>
    </location>
</feature>
<protein>
    <recommendedName>
        <fullName>Ponticulin-like protein D</fullName>
    </recommendedName>
</protein>
<comment type="subcellular location">
    <subcellularLocation>
        <location evidence="2">Cell membrane</location>
        <topology evidence="2">Lipid-anchor</topology>
        <topology evidence="2">GPI-anchor</topology>
    </subcellularLocation>
</comment>
<comment type="PTM">
    <text evidence="2">The GPI-like-anchor contains a phosphoceramide group, rather than a phosphatidyl group.</text>
</comment>
<comment type="similarity">
    <text evidence="2">Belongs to the ponticulin family.</text>
</comment>
<comment type="caution">
    <text evidence="2">The Dictyosteliida are known to produce a glycosylsphingolipidinositol anchor (GPI-like-anchor). It has not been established whether Dictyosteliida make a glycosylphosphatidylinositol anchor (GPI-anchor) also, and whether their GPI-like-anchor modifications can be interconverted with GPI-anchor modifications in a resculpting process. It has not been established that the GPI-like-anchor modification in Dictyosteliida utilizes the same sequence motif.</text>
</comment>
<dbReference type="EMBL" id="AAFI02000047">
    <property type="protein sequence ID" value="EAL66071.1"/>
    <property type="molecule type" value="Genomic_DNA"/>
</dbReference>
<dbReference type="RefSeq" id="XP_640041.1">
    <property type="nucleotide sequence ID" value="XM_634949.1"/>
</dbReference>
<dbReference type="FunCoup" id="Q54SJ8">
    <property type="interactions" value="92"/>
</dbReference>
<dbReference type="GlyCosmos" id="Q54SJ8">
    <property type="glycosylation" value="1 site, No reported glycans"/>
</dbReference>
<dbReference type="GlyGen" id="Q54SJ8">
    <property type="glycosylation" value="1 site"/>
</dbReference>
<dbReference type="PaxDb" id="44689-DDB0232396"/>
<dbReference type="EnsemblProtists" id="EAL66071">
    <property type="protein sequence ID" value="EAL66071"/>
    <property type="gene ID" value="DDB_G0282423"/>
</dbReference>
<dbReference type="GeneID" id="8623567"/>
<dbReference type="KEGG" id="ddi:DDB_G0282423"/>
<dbReference type="dictyBase" id="DDB_G0282423">
    <property type="gene designation" value="ponD"/>
</dbReference>
<dbReference type="VEuPathDB" id="AmoebaDB:DDB_G0282423"/>
<dbReference type="HOGENOM" id="CLU_1762188_0_0_1"/>
<dbReference type="InParanoid" id="Q54SJ8"/>
<dbReference type="PRO" id="PR:Q54SJ8"/>
<dbReference type="Proteomes" id="UP000002195">
    <property type="component" value="Chromosome 3"/>
</dbReference>
<dbReference type="GO" id="GO:0016020">
    <property type="term" value="C:membrane"/>
    <property type="evidence" value="ECO:0000250"/>
    <property type="project" value="dictyBase"/>
</dbReference>
<dbReference type="GO" id="GO:0005886">
    <property type="term" value="C:plasma membrane"/>
    <property type="evidence" value="ECO:0007669"/>
    <property type="project" value="UniProtKB-SubCell"/>
</dbReference>
<dbReference type="GO" id="GO:0098552">
    <property type="term" value="C:side of membrane"/>
    <property type="evidence" value="ECO:0007669"/>
    <property type="project" value="UniProtKB-KW"/>
</dbReference>
<dbReference type="GO" id="GO:0051015">
    <property type="term" value="F:actin filament binding"/>
    <property type="evidence" value="ECO:0000250"/>
    <property type="project" value="dictyBase"/>
</dbReference>
<gene>
    <name type="primary">ponD</name>
    <name type="ORF">DDB_G0282423</name>
</gene>
<proteinExistence type="inferred from homology"/>
<keyword id="KW-1003">Cell membrane</keyword>
<keyword id="KW-0325">Glycoprotein</keyword>
<keyword id="KW-0336">GPI-anchor</keyword>
<keyword id="KW-0449">Lipoprotein</keyword>
<keyword id="KW-0472">Membrane</keyword>
<keyword id="KW-1185">Reference proteome</keyword>
<keyword id="KW-0732">Signal</keyword>
<sequence length="148" mass="15356">MLLNKSLLLLVAFVFAIVSATTYSEFKITGTNPLTQETCDPSIVYTSQNGACQGVCGMFGKLVATSNSTQFNVEMYGSAGCVGPLGTTGLTCLPNEQVIKVTETISVVCFADKDEPSGDDSSGDDSSAAATMIASFSAILIALLFALL</sequence>
<reference key="1">
    <citation type="journal article" date="2005" name="Nature">
        <title>The genome of the social amoeba Dictyostelium discoideum.</title>
        <authorList>
            <person name="Eichinger L."/>
            <person name="Pachebat J.A."/>
            <person name="Gloeckner G."/>
            <person name="Rajandream M.A."/>
            <person name="Sucgang R."/>
            <person name="Berriman M."/>
            <person name="Song J."/>
            <person name="Olsen R."/>
            <person name="Szafranski K."/>
            <person name="Xu Q."/>
            <person name="Tunggal B."/>
            <person name="Kummerfeld S."/>
            <person name="Madera M."/>
            <person name="Konfortov B.A."/>
            <person name="Rivero F."/>
            <person name="Bankier A.T."/>
            <person name="Lehmann R."/>
            <person name="Hamlin N."/>
            <person name="Davies R."/>
            <person name="Gaudet P."/>
            <person name="Fey P."/>
            <person name="Pilcher K."/>
            <person name="Chen G."/>
            <person name="Saunders D."/>
            <person name="Sodergren E.J."/>
            <person name="Davis P."/>
            <person name="Kerhornou A."/>
            <person name="Nie X."/>
            <person name="Hall N."/>
            <person name="Anjard C."/>
            <person name="Hemphill L."/>
            <person name="Bason N."/>
            <person name="Farbrother P."/>
            <person name="Desany B."/>
            <person name="Just E."/>
            <person name="Morio T."/>
            <person name="Rost R."/>
            <person name="Churcher C.M."/>
            <person name="Cooper J."/>
            <person name="Haydock S."/>
            <person name="van Driessche N."/>
            <person name="Cronin A."/>
            <person name="Goodhead I."/>
            <person name="Muzny D.M."/>
            <person name="Mourier T."/>
            <person name="Pain A."/>
            <person name="Lu M."/>
            <person name="Harper D."/>
            <person name="Lindsay R."/>
            <person name="Hauser H."/>
            <person name="James K.D."/>
            <person name="Quiles M."/>
            <person name="Madan Babu M."/>
            <person name="Saito T."/>
            <person name="Buchrieser C."/>
            <person name="Wardroper A."/>
            <person name="Felder M."/>
            <person name="Thangavelu M."/>
            <person name="Johnson D."/>
            <person name="Knights A."/>
            <person name="Loulseged H."/>
            <person name="Mungall K.L."/>
            <person name="Oliver K."/>
            <person name="Price C."/>
            <person name="Quail M.A."/>
            <person name="Urushihara H."/>
            <person name="Hernandez J."/>
            <person name="Rabbinowitsch E."/>
            <person name="Steffen D."/>
            <person name="Sanders M."/>
            <person name="Ma J."/>
            <person name="Kohara Y."/>
            <person name="Sharp S."/>
            <person name="Simmonds M.N."/>
            <person name="Spiegler S."/>
            <person name="Tivey A."/>
            <person name="Sugano S."/>
            <person name="White B."/>
            <person name="Walker D."/>
            <person name="Woodward J.R."/>
            <person name="Winckler T."/>
            <person name="Tanaka Y."/>
            <person name="Shaulsky G."/>
            <person name="Schleicher M."/>
            <person name="Weinstock G.M."/>
            <person name="Rosenthal A."/>
            <person name="Cox E.C."/>
            <person name="Chisholm R.L."/>
            <person name="Gibbs R.A."/>
            <person name="Loomis W.F."/>
            <person name="Platzer M."/>
            <person name="Kay R.R."/>
            <person name="Williams J.G."/>
            <person name="Dear P.H."/>
            <person name="Noegel A.A."/>
            <person name="Barrell B.G."/>
            <person name="Kuspa A."/>
        </authorList>
    </citation>
    <scope>NUCLEOTIDE SEQUENCE [LARGE SCALE GENOMIC DNA]</scope>
    <source>
        <strain>AX4</strain>
    </source>
</reference>
<reference key="2">
    <citation type="journal article" date="2008" name="Langmuir">
        <title>Minimal F-actin cytoskeletal system for planar supported phospholipid bilayers.</title>
        <authorList>
            <person name="Barfoot R.J."/>
            <person name="Sheikh K.H."/>
            <person name="Johnson B.R."/>
            <person name="Colyer J."/>
            <person name="Miles R.E."/>
            <person name="Jeuken L.J."/>
            <person name="Bushby R.J."/>
            <person name="Evans S.D."/>
        </authorList>
    </citation>
    <scope>FUNCTION</scope>
</reference>